<proteinExistence type="inferred from homology"/>
<evidence type="ECO:0000255" key="1">
    <source>
        <dbReference type="HAMAP-Rule" id="MF_00096"/>
    </source>
</evidence>
<feature type="chain" id="PRO_1000008106" description="DNA mismatch repair protein MutS">
    <location>
        <begin position="1"/>
        <end position="844"/>
    </location>
</feature>
<feature type="binding site" evidence="1">
    <location>
        <begin position="602"/>
        <end position="609"/>
    </location>
    <ligand>
        <name>ATP</name>
        <dbReference type="ChEBI" id="CHEBI:30616"/>
    </ligand>
</feature>
<organism>
    <name type="scientific">Streptococcus pneumoniae serotype 2 (strain D39 / NCTC 7466)</name>
    <dbReference type="NCBI Taxonomy" id="373153"/>
    <lineage>
        <taxon>Bacteria</taxon>
        <taxon>Bacillati</taxon>
        <taxon>Bacillota</taxon>
        <taxon>Bacilli</taxon>
        <taxon>Lactobacillales</taxon>
        <taxon>Streptococcaceae</taxon>
        <taxon>Streptococcus</taxon>
    </lineage>
</organism>
<comment type="function">
    <text evidence="1">This protein is involved in the repair of mismatches in DNA. It is possible that it carries out the mismatch recognition step. This protein has a weak ATPase activity.</text>
</comment>
<comment type="similarity">
    <text evidence="1">Belongs to the DNA mismatch repair MutS family.</text>
</comment>
<accession>Q04I96</accession>
<dbReference type="EMBL" id="CP000410">
    <property type="protein sequence ID" value="ABJ54127.1"/>
    <property type="molecule type" value="Genomic_DNA"/>
</dbReference>
<dbReference type="RefSeq" id="WP_000963680.1">
    <property type="nucleotide sequence ID" value="NZ_JAMLJR010000012.1"/>
</dbReference>
<dbReference type="SMR" id="Q04I96"/>
<dbReference type="PaxDb" id="373153-SPD_1903"/>
<dbReference type="KEGG" id="spd:SPD_1903"/>
<dbReference type="eggNOG" id="COG0249">
    <property type="taxonomic scope" value="Bacteria"/>
</dbReference>
<dbReference type="HOGENOM" id="CLU_002472_3_1_9"/>
<dbReference type="BioCyc" id="SPNE373153:G1G6V-2048-MONOMER"/>
<dbReference type="Proteomes" id="UP000001452">
    <property type="component" value="Chromosome"/>
</dbReference>
<dbReference type="GO" id="GO:0005829">
    <property type="term" value="C:cytosol"/>
    <property type="evidence" value="ECO:0007669"/>
    <property type="project" value="TreeGrafter"/>
</dbReference>
<dbReference type="GO" id="GO:0005524">
    <property type="term" value="F:ATP binding"/>
    <property type="evidence" value="ECO:0007669"/>
    <property type="project" value="UniProtKB-UniRule"/>
</dbReference>
<dbReference type="GO" id="GO:0140664">
    <property type="term" value="F:ATP-dependent DNA damage sensor activity"/>
    <property type="evidence" value="ECO:0007669"/>
    <property type="project" value="InterPro"/>
</dbReference>
<dbReference type="GO" id="GO:0003684">
    <property type="term" value="F:damaged DNA binding"/>
    <property type="evidence" value="ECO:0007669"/>
    <property type="project" value="UniProtKB-UniRule"/>
</dbReference>
<dbReference type="GO" id="GO:0030983">
    <property type="term" value="F:mismatched DNA binding"/>
    <property type="evidence" value="ECO:0007669"/>
    <property type="project" value="InterPro"/>
</dbReference>
<dbReference type="GO" id="GO:0006298">
    <property type="term" value="P:mismatch repair"/>
    <property type="evidence" value="ECO:0007669"/>
    <property type="project" value="UniProtKB-UniRule"/>
</dbReference>
<dbReference type="CDD" id="cd03284">
    <property type="entry name" value="ABC_MutS1"/>
    <property type="match status" value="1"/>
</dbReference>
<dbReference type="FunFam" id="1.10.1420.10:FF:000018">
    <property type="entry name" value="DNA mismatch repair protein MutS"/>
    <property type="match status" value="1"/>
</dbReference>
<dbReference type="FunFam" id="3.30.420.110:FF:000015">
    <property type="entry name" value="DNA mismatch repair protein MutS"/>
    <property type="match status" value="1"/>
</dbReference>
<dbReference type="FunFam" id="3.40.1170.10:FF:000001">
    <property type="entry name" value="DNA mismatch repair protein MutS"/>
    <property type="match status" value="1"/>
</dbReference>
<dbReference type="FunFam" id="3.40.50.300:FF:000896">
    <property type="entry name" value="DNA mismatch repair protein MutS"/>
    <property type="match status" value="1"/>
</dbReference>
<dbReference type="Gene3D" id="1.10.1420.10">
    <property type="match status" value="2"/>
</dbReference>
<dbReference type="Gene3D" id="3.40.1170.10">
    <property type="entry name" value="DNA repair protein MutS, domain I"/>
    <property type="match status" value="1"/>
</dbReference>
<dbReference type="Gene3D" id="3.30.420.110">
    <property type="entry name" value="MutS, connector domain"/>
    <property type="match status" value="1"/>
</dbReference>
<dbReference type="Gene3D" id="3.40.50.300">
    <property type="entry name" value="P-loop containing nucleotide triphosphate hydrolases"/>
    <property type="match status" value="1"/>
</dbReference>
<dbReference type="HAMAP" id="MF_00096">
    <property type="entry name" value="MutS"/>
    <property type="match status" value="1"/>
</dbReference>
<dbReference type="InterPro" id="IPR005748">
    <property type="entry name" value="DNA_mismatch_repair_MutS"/>
</dbReference>
<dbReference type="InterPro" id="IPR007695">
    <property type="entry name" value="DNA_mismatch_repair_MutS-lik_N"/>
</dbReference>
<dbReference type="InterPro" id="IPR017261">
    <property type="entry name" value="DNA_mismatch_repair_MutS/MSH"/>
</dbReference>
<dbReference type="InterPro" id="IPR000432">
    <property type="entry name" value="DNA_mismatch_repair_MutS_C"/>
</dbReference>
<dbReference type="InterPro" id="IPR007861">
    <property type="entry name" value="DNA_mismatch_repair_MutS_clamp"/>
</dbReference>
<dbReference type="InterPro" id="IPR007696">
    <property type="entry name" value="DNA_mismatch_repair_MutS_core"/>
</dbReference>
<dbReference type="InterPro" id="IPR016151">
    <property type="entry name" value="DNA_mismatch_repair_MutS_N"/>
</dbReference>
<dbReference type="InterPro" id="IPR036187">
    <property type="entry name" value="DNA_mismatch_repair_MutS_sf"/>
</dbReference>
<dbReference type="InterPro" id="IPR007860">
    <property type="entry name" value="DNA_mmatch_repair_MutS_con_dom"/>
</dbReference>
<dbReference type="InterPro" id="IPR045076">
    <property type="entry name" value="MutS"/>
</dbReference>
<dbReference type="InterPro" id="IPR036678">
    <property type="entry name" value="MutS_con_dom_sf"/>
</dbReference>
<dbReference type="InterPro" id="IPR027417">
    <property type="entry name" value="P-loop_NTPase"/>
</dbReference>
<dbReference type="NCBIfam" id="TIGR01070">
    <property type="entry name" value="mutS1"/>
    <property type="match status" value="1"/>
</dbReference>
<dbReference type="NCBIfam" id="NF003810">
    <property type="entry name" value="PRK05399.1"/>
    <property type="match status" value="1"/>
</dbReference>
<dbReference type="PANTHER" id="PTHR11361:SF34">
    <property type="entry name" value="DNA MISMATCH REPAIR PROTEIN MSH1, MITOCHONDRIAL"/>
    <property type="match status" value="1"/>
</dbReference>
<dbReference type="PANTHER" id="PTHR11361">
    <property type="entry name" value="DNA MISMATCH REPAIR PROTEIN MUTS FAMILY MEMBER"/>
    <property type="match status" value="1"/>
</dbReference>
<dbReference type="Pfam" id="PF01624">
    <property type="entry name" value="MutS_I"/>
    <property type="match status" value="1"/>
</dbReference>
<dbReference type="Pfam" id="PF05188">
    <property type="entry name" value="MutS_II"/>
    <property type="match status" value="1"/>
</dbReference>
<dbReference type="Pfam" id="PF05192">
    <property type="entry name" value="MutS_III"/>
    <property type="match status" value="1"/>
</dbReference>
<dbReference type="Pfam" id="PF05190">
    <property type="entry name" value="MutS_IV"/>
    <property type="match status" value="1"/>
</dbReference>
<dbReference type="Pfam" id="PF00488">
    <property type="entry name" value="MutS_V"/>
    <property type="match status" value="1"/>
</dbReference>
<dbReference type="PIRSF" id="PIRSF037677">
    <property type="entry name" value="DNA_mis_repair_Msh6"/>
    <property type="match status" value="1"/>
</dbReference>
<dbReference type="SMART" id="SM00534">
    <property type="entry name" value="MUTSac"/>
    <property type="match status" value="1"/>
</dbReference>
<dbReference type="SMART" id="SM00533">
    <property type="entry name" value="MUTSd"/>
    <property type="match status" value="1"/>
</dbReference>
<dbReference type="SUPFAM" id="SSF55271">
    <property type="entry name" value="DNA repair protein MutS, domain I"/>
    <property type="match status" value="1"/>
</dbReference>
<dbReference type="SUPFAM" id="SSF53150">
    <property type="entry name" value="DNA repair protein MutS, domain II"/>
    <property type="match status" value="1"/>
</dbReference>
<dbReference type="SUPFAM" id="SSF48334">
    <property type="entry name" value="DNA repair protein MutS, domain III"/>
    <property type="match status" value="1"/>
</dbReference>
<dbReference type="SUPFAM" id="SSF52540">
    <property type="entry name" value="P-loop containing nucleoside triphosphate hydrolases"/>
    <property type="match status" value="1"/>
</dbReference>
<dbReference type="PROSITE" id="PS00486">
    <property type="entry name" value="DNA_MISMATCH_REPAIR_2"/>
    <property type="match status" value="1"/>
</dbReference>
<reference key="1">
    <citation type="journal article" date="2007" name="J. Bacteriol.">
        <title>Genome sequence of Avery's virulent serotype 2 strain D39 of Streptococcus pneumoniae and comparison with that of unencapsulated laboratory strain R6.</title>
        <authorList>
            <person name="Lanie J.A."/>
            <person name="Ng W.-L."/>
            <person name="Kazmierczak K.M."/>
            <person name="Andrzejewski T.M."/>
            <person name="Davidsen T.M."/>
            <person name="Wayne K.J."/>
            <person name="Tettelin H."/>
            <person name="Glass J.I."/>
            <person name="Winkler M.E."/>
        </authorList>
    </citation>
    <scope>NUCLEOTIDE SEQUENCE [LARGE SCALE GENOMIC DNA]</scope>
    <source>
        <strain>D39 / NCTC 7466</strain>
    </source>
</reference>
<protein>
    <recommendedName>
        <fullName evidence="1">DNA mismatch repair protein MutS</fullName>
    </recommendedName>
</protein>
<gene>
    <name evidence="1" type="primary">mutS</name>
    <name type="ordered locus">SPD_1903</name>
</gene>
<keyword id="KW-0067">ATP-binding</keyword>
<keyword id="KW-0227">DNA damage</keyword>
<keyword id="KW-0234">DNA repair</keyword>
<keyword id="KW-0238">DNA-binding</keyword>
<keyword id="KW-0547">Nucleotide-binding</keyword>
<keyword id="KW-1185">Reference proteome</keyword>
<sequence>MAIEKLSPGMQQYVDIKKQYPDAFLLFRMGDFYELFYEDAVNAAQILEISLTSRNKNADNPIPMAGVPYHSAQQYIDVLIEQGYKVAIAEQMEDPKQAVGVVKREVVQVITPGTVVDSSKPDSQNNFLVSIDREGNQFGLAYMDLVTGDFYVTGLLDFTLVCGEIRNLKAREVVLGYDLSEEEEQILSRQMNLVLSYEKESFEDLHLLDLRLATVEQTASSKLLQYVHRTQMRELNHLKPVIRYEIKDFLQMDYATKASLDLVENARSGKKQGSLFWLLDETKTAMGMRLLRSWIHRPLIDKERIVQRQEVVQVFLDHFFERSDLTDSLKGVYDIERLASRVSFGKTNPKDLLQLATTLSSVPRIRAILEGMEQPTLAYLIAQLDAIPELESLISAAIAPEAPHVITDGGIIRTGFDETLDKYRCVLREGTSWIAEIEAKERENSGISTLKIDYNKKDGYYFHVTNSQLGNVPAHFFRKATLKNSERFGTEELARIEGDMLEAREKSANLEYEIFMRIREEVGKYIQRLQALAQGIATVDVLQSLAVVAETQHLIRPEFGDDSQIDIRKGRHAVVEKVMGAQTYIPNTIQMAEDTSIQLVTGPNMSGKSTYMRQLAMTAVMAQLGSYVPAESAHLPIFDAIFTRIGAADDLVSGQSTFMVEMMEANNAISHATKNSLILFDELGRGTATYDGMALAQSIIEYIHEHIGAKTLFATHYHELTSLESSLQHLVNVHVATLEQDGQVTFLHKIEPGPADKSYGIHVAKIAGLPADLLARADKILTQLENQGTESPPPMRQTSAVTEQISLFDRAEEHPILAELAKLDVYNMTPMQVMNVLVELKQKL</sequence>
<name>MUTS_STRP2</name>